<feature type="chain" id="PRO_0000293755" description="Small ribosomal subunit protein uS3">
    <location>
        <begin position="1"/>
        <end position="236"/>
    </location>
</feature>
<feature type="domain" description="KH type-2" evidence="1">
    <location>
        <begin position="39"/>
        <end position="107"/>
    </location>
</feature>
<feature type="region of interest" description="Disordered" evidence="2">
    <location>
        <begin position="214"/>
        <end position="236"/>
    </location>
</feature>
<dbReference type="EMBL" id="CP000524">
    <property type="protein sequence ID" value="ABM45213.1"/>
    <property type="molecule type" value="Genomic_DNA"/>
</dbReference>
<dbReference type="EMBL" id="CP000524">
    <property type="protein sequence ID" value="ABM45301.1"/>
    <property type="molecule type" value="Genomic_DNA"/>
</dbReference>
<dbReference type="SMR" id="A1USM0"/>
<dbReference type="STRING" id="360095.BARBAKC583_0672"/>
<dbReference type="GeneID" id="4684975"/>
<dbReference type="KEGG" id="bbk:BARBAKC583_0672"/>
<dbReference type="KEGG" id="bbk:BARBAKC583_0704"/>
<dbReference type="PATRIC" id="fig|360095.6.peg.653"/>
<dbReference type="eggNOG" id="COG0092">
    <property type="taxonomic scope" value="Bacteria"/>
</dbReference>
<dbReference type="HOGENOM" id="CLU_058591_0_2_5"/>
<dbReference type="OrthoDB" id="9806396at2"/>
<dbReference type="Proteomes" id="UP000000643">
    <property type="component" value="Chromosome"/>
</dbReference>
<dbReference type="GO" id="GO:0022627">
    <property type="term" value="C:cytosolic small ribosomal subunit"/>
    <property type="evidence" value="ECO:0007669"/>
    <property type="project" value="TreeGrafter"/>
</dbReference>
<dbReference type="GO" id="GO:0003729">
    <property type="term" value="F:mRNA binding"/>
    <property type="evidence" value="ECO:0007669"/>
    <property type="project" value="UniProtKB-UniRule"/>
</dbReference>
<dbReference type="GO" id="GO:0019843">
    <property type="term" value="F:rRNA binding"/>
    <property type="evidence" value="ECO:0007669"/>
    <property type="project" value="UniProtKB-UniRule"/>
</dbReference>
<dbReference type="GO" id="GO:0003735">
    <property type="term" value="F:structural constituent of ribosome"/>
    <property type="evidence" value="ECO:0007669"/>
    <property type="project" value="InterPro"/>
</dbReference>
<dbReference type="GO" id="GO:0006412">
    <property type="term" value="P:translation"/>
    <property type="evidence" value="ECO:0007669"/>
    <property type="project" value="UniProtKB-UniRule"/>
</dbReference>
<dbReference type="CDD" id="cd02412">
    <property type="entry name" value="KH-II_30S_S3"/>
    <property type="match status" value="1"/>
</dbReference>
<dbReference type="FunFam" id="3.30.1140.32:FF:000002">
    <property type="entry name" value="30S ribosomal protein S3"/>
    <property type="match status" value="1"/>
</dbReference>
<dbReference type="FunFam" id="3.30.300.20:FF:000001">
    <property type="entry name" value="30S ribosomal protein S3"/>
    <property type="match status" value="1"/>
</dbReference>
<dbReference type="Gene3D" id="3.30.300.20">
    <property type="match status" value="1"/>
</dbReference>
<dbReference type="Gene3D" id="3.30.1140.32">
    <property type="entry name" value="Ribosomal protein S3, C-terminal domain"/>
    <property type="match status" value="1"/>
</dbReference>
<dbReference type="HAMAP" id="MF_01309_B">
    <property type="entry name" value="Ribosomal_uS3_B"/>
    <property type="match status" value="1"/>
</dbReference>
<dbReference type="InterPro" id="IPR004087">
    <property type="entry name" value="KH_dom"/>
</dbReference>
<dbReference type="InterPro" id="IPR015946">
    <property type="entry name" value="KH_dom-like_a/b"/>
</dbReference>
<dbReference type="InterPro" id="IPR004044">
    <property type="entry name" value="KH_dom_type_2"/>
</dbReference>
<dbReference type="InterPro" id="IPR009019">
    <property type="entry name" value="KH_sf_prok-type"/>
</dbReference>
<dbReference type="InterPro" id="IPR036419">
    <property type="entry name" value="Ribosomal_S3_C_sf"/>
</dbReference>
<dbReference type="InterPro" id="IPR005704">
    <property type="entry name" value="Ribosomal_uS3_bac-typ"/>
</dbReference>
<dbReference type="InterPro" id="IPR001351">
    <property type="entry name" value="Ribosomal_uS3_C"/>
</dbReference>
<dbReference type="InterPro" id="IPR018280">
    <property type="entry name" value="Ribosomal_uS3_CS"/>
</dbReference>
<dbReference type="NCBIfam" id="TIGR01009">
    <property type="entry name" value="rpsC_bact"/>
    <property type="match status" value="1"/>
</dbReference>
<dbReference type="PANTHER" id="PTHR11760">
    <property type="entry name" value="30S/40S RIBOSOMAL PROTEIN S3"/>
    <property type="match status" value="1"/>
</dbReference>
<dbReference type="PANTHER" id="PTHR11760:SF19">
    <property type="entry name" value="SMALL RIBOSOMAL SUBUNIT PROTEIN US3C"/>
    <property type="match status" value="1"/>
</dbReference>
<dbReference type="Pfam" id="PF07650">
    <property type="entry name" value="KH_2"/>
    <property type="match status" value="1"/>
</dbReference>
<dbReference type="Pfam" id="PF00189">
    <property type="entry name" value="Ribosomal_S3_C"/>
    <property type="match status" value="1"/>
</dbReference>
<dbReference type="SMART" id="SM00322">
    <property type="entry name" value="KH"/>
    <property type="match status" value="1"/>
</dbReference>
<dbReference type="SUPFAM" id="SSF54814">
    <property type="entry name" value="Prokaryotic type KH domain (KH-domain type II)"/>
    <property type="match status" value="1"/>
</dbReference>
<dbReference type="SUPFAM" id="SSF54821">
    <property type="entry name" value="Ribosomal protein S3 C-terminal domain"/>
    <property type="match status" value="1"/>
</dbReference>
<dbReference type="PROSITE" id="PS50823">
    <property type="entry name" value="KH_TYPE_2"/>
    <property type="match status" value="1"/>
</dbReference>
<dbReference type="PROSITE" id="PS00548">
    <property type="entry name" value="RIBOSOMAL_S3"/>
    <property type="match status" value="1"/>
</dbReference>
<reference key="1">
    <citation type="submission" date="2006-12" db="EMBL/GenBank/DDBJ databases">
        <authorList>
            <person name="Hendrix L."/>
            <person name="Mohamoud Y."/>
            <person name="Radune D."/>
            <person name="Shvartsbeyn A."/>
            <person name="Daugherty S."/>
            <person name="Dodson R."/>
            <person name="Durkin A.S."/>
            <person name="Harkins D."/>
            <person name="Huot H."/>
            <person name="Kothari S.P."/>
            <person name="Madupu R."/>
            <person name="Li J."/>
            <person name="Nelson W.C."/>
            <person name="Shrivastava S."/>
            <person name="Giglio M.G."/>
            <person name="Haft D."/>
            <person name="Selengut J."/>
            <person name="Fraser-Ligget C."/>
            <person name="Seshadri R."/>
        </authorList>
    </citation>
    <scope>NUCLEOTIDE SEQUENCE [LARGE SCALE GENOMIC DNA]</scope>
    <source>
        <strain>ATCC 35685 / KC583 / Herrer 020/F12,63</strain>
    </source>
</reference>
<evidence type="ECO:0000255" key="1">
    <source>
        <dbReference type="HAMAP-Rule" id="MF_01309"/>
    </source>
</evidence>
<evidence type="ECO:0000256" key="2">
    <source>
        <dbReference type="SAM" id="MobiDB-lite"/>
    </source>
</evidence>
<evidence type="ECO:0000305" key="3"/>
<comment type="function">
    <text evidence="1">Binds the lower part of the 30S subunit head. Binds mRNA in the 70S ribosome, positioning it for translation.</text>
</comment>
<comment type="subunit">
    <text evidence="1">Part of the 30S ribosomal subunit. Forms a tight complex with proteins S10 and S14.</text>
</comment>
<comment type="similarity">
    <text evidence="1">Belongs to the universal ribosomal protein uS3 family.</text>
</comment>
<accession>A1USM0</accession>
<keyword id="KW-0687">Ribonucleoprotein</keyword>
<keyword id="KW-0689">Ribosomal protein</keyword>
<keyword id="KW-0694">RNA-binding</keyword>
<keyword id="KW-0699">rRNA-binding</keyword>
<organism>
    <name type="scientific">Bartonella bacilliformis (strain ATCC 35685 / KC583 / Herrer 020/F12,63)</name>
    <dbReference type="NCBI Taxonomy" id="360095"/>
    <lineage>
        <taxon>Bacteria</taxon>
        <taxon>Pseudomonadati</taxon>
        <taxon>Pseudomonadota</taxon>
        <taxon>Alphaproteobacteria</taxon>
        <taxon>Hyphomicrobiales</taxon>
        <taxon>Bartonellaceae</taxon>
        <taxon>Bartonella</taxon>
    </lineage>
</organism>
<proteinExistence type="inferred from homology"/>
<protein>
    <recommendedName>
        <fullName evidence="1">Small ribosomal subunit protein uS3</fullName>
    </recommendedName>
    <alternativeName>
        <fullName evidence="3">30S ribosomal protein S3</fullName>
    </alternativeName>
</protein>
<sequence>MGQKINPIGLRLGVNQTWSSRWYADSGEYGRLLHEDLKIRSYVMEELKQAAISKVIIERPHKKCRVTIHSARPGLIIGKKGADIEKLRHQLSEMTNAETSLNIVEIRKPEIDATIIAQSVAQQLERRVAFRRAMKRAVQSAMRLGAEGIRINCSGRLGGAEIARMEWYREGRVPLHTLRADVDYSTAEARTAYGVCGVKVWVFKGEILEHDPMASEHRATRNDNSSSSLNRRRESV</sequence>
<name>RS3_BARBK</name>
<gene>
    <name evidence="1" type="primary">rpsC1</name>
    <name type="ordered locus">BARBAKC583_0672</name>
</gene>
<gene>
    <name evidence="1" type="primary">rpsC2</name>
    <name type="ordered locus">BARBAKC583_0704</name>
</gene>